<gene>
    <name type="ordered locus">S4062</name>
</gene>
<sequence>MTKNTRFSPEVRQRAVRMVLESQGEYDSQWATICSIAPKIGCTPETLRVRVRQHERDTGGGDGGLTTAERQRLKELERENRELRRSNDILRQASAYFAKAEFDRLWKK</sequence>
<comment type="similarity">
    <text evidence="1">Belongs to the transposase 8 family.</text>
</comment>
<accession>P0A1V2</accession>
<accession>P16941</accession>
<organism>
    <name type="scientific">Shigella flexneri</name>
    <dbReference type="NCBI Taxonomy" id="623"/>
    <lineage>
        <taxon>Bacteria</taxon>
        <taxon>Pseudomonadati</taxon>
        <taxon>Pseudomonadota</taxon>
        <taxon>Gammaproteobacteria</taxon>
        <taxon>Enterobacterales</taxon>
        <taxon>Enterobacteriaceae</taxon>
        <taxon>Shigella</taxon>
    </lineage>
</organism>
<protein>
    <recommendedName>
        <fullName>Insertion element IS629 uncharacterized 12 kDa protein S4062</fullName>
    </recommendedName>
</protein>
<name>YIS3_SHIFL</name>
<keyword id="KW-0814">Transposable element</keyword>
<reference key="1">
    <citation type="journal article" date="2003" name="Infect. Immun.">
        <title>Complete genome sequence and comparative genomics of Shigella flexneri serotype 2a strain 2457T.</title>
        <authorList>
            <person name="Wei J."/>
            <person name="Goldberg M.B."/>
            <person name="Burland V."/>
            <person name="Venkatesan M.M."/>
            <person name="Deng W."/>
            <person name="Fournier G."/>
            <person name="Mayhew G.F."/>
            <person name="Plunkett G. III"/>
            <person name="Rose D.J."/>
            <person name="Darling A."/>
            <person name="Mau B."/>
            <person name="Perna N.T."/>
            <person name="Payne S.M."/>
            <person name="Runyen-Janecky L.J."/>
            <person name="Zhou S."/>
            <person name="Schwartz D.C."/>
            <person name="Blattner F.R."/>
        </authorList>
    </citation>
    <scope>NUCLEOTIDE SEQUENCE [LARGE SCALE GENOMIC DNA]</scope>
    <source>
        <strain>ATCC 700930 / 2457T / Serotype 2a</strain>
    </source>
</reference>
<feature type="chain" id="PRO_0000075503" description="Insertion element IS629 uncharacterized 12 kDa protein S4062">
    <location>
        <begin position="1"/>
        <end position="108"/>
    </location>
</feature>
<dbReference type="EMBL" id="AE014073">
    <property type="protein sequence ID" value="AAP19042.1"/>
    <property type="molecule type" value="Genomic_DNA"/>
</dbReference>
<dbReference type="SMR" id="P0A1V2"/>
<dbReference type="STRING" id="198214.SF1371"/>
<dbReference type="PaxDb" id="198214-SF1371"/>
<dbReference type="KEGG" id="sfx:S4062"/>
<dbReference type="HOGENOM" id="CLU_027402_33_6_6"/>
<dbReference type="Proteomes" id="UP000002673">
    <property type="component" value="Chromosome"/>
</dbReference>
<dbReference type="GO" id="GO:0003677">
    <property type="term" value="F:DNA binding"/>
    <property type="evidence" value="ECO:0007669"/>
    <property type="project" value="InterPro"/>
</dbReference>
<dbReference type="GO" id="GO:0004803">
    <property type="term" value="F:transposase activity"/>
    <property type="evidence" value="ECO:0007669"/>
    <property type="project" value="InterPro"/>
</dbReference>
<dbReference type="GO" id="GO:0006313">
    <property type="term" value="P:DNA transposition"/>
    <property type="evidence" value="ECO:0007669"/>
    <property type="project" value="InterPro"/>
</dbReference>
<dbReference type="Gene3D" id="1.10.10.10">
    <property type="entry name" value="Winged helix-like DNA-binding domain superfamily/Winged helix DNA-binding domain"/>
    <property type="match status" value="1"/>
</dbReference>
<dbReference type="InterPro" id="IPR009057">
    <property type="entry name" value="Homeodomain-like_sf"/>
</dbReference>
<dbReference type="InterPro" id="IPR002514">
    <property type="entry name" value="Transposase_8"/>
</dbReference>
<dbReference type="InterPro" id="IPR036388">
    <property type="entry name" value="WH-like_DNA-bd_sf"/>
</dbReference>
<dbReference type="Pfam" id="PF01527">
    <property type="entry name" value="HTH_Tnp_1"/>
    <property type="match status" value="1"/>
</dbReference>
<dbReference type="SUPFAM" id="SSF46689">
    <property type="entry name" value="Homeodomain-like"/>
    <property type="match status" value="1"/>
</dbReference>
<evidence type="ECO:0000305" key="1"/>
<proteinExistence type="inferred from homology"/>